<proteinExistence type="predicted"/>
<reference key="1">
    <citation type="journal article" date="1997" name="Nature">
        <title>The nucleotide sequence of Saccharomyces cerevisiae chromosome XIII.</title>
        <authorList>
            <person name="Bowman S."/>
            <person name="Churcher C.M."/>
            <person name="Badcock K."/>
            <person name="Brown D."/>
            <person name="Chillingworth T."/>
            <person name="Connor R."/>
            <person name="Dedman K."/>
            <person name="Devlin K."/>
            <person name="Gentles S."/>
            <person name="Hamlin N."/>
            <person name="Hunt S."/>
            <person name="Jagels K."/>
            <person name="Lye G."/>
            <person name="Moule S."/>
            <person name="Odell C."/>
            <person name="Pearson D."/>
            <person name="Rajandream M.A."/>
            <person name="Rice P."/>
            <person name="Skelton J."/>
            <person name="Walsh S.V."/>
            <person name="Whitehead S."/>
            <person name="Barrell B.G."/>
        </authorList>
    </citation>
    <scope>NUCLEOTIDE SEQUENCE [LARGE SCALE GENOMIC DNA]</scope>
    <source>
        <strain>ATCC 204508 / S288c</strain>
    </source>
</reference>
<reference key="2">
    <citation type="journal article" date="2014" name="G3 (Bethesda)">
        <title>The reference genome sequence of Saccharomyces cerevisiae: Then and now.</title>
        <authorList>
            <person name="Engel S.R."/>
            <person name="Dietrich F.S."/>
            <person name="Fisk D.G."/>
            <person name="Binkley G."/>
            <person name="Balakrishnan R."/>
            <person name="Costanzo M.C."/>
            <person name="Dwight S.S."/>
            <person name="Hitz B.C."/>
            <person name="Karra K."/>
            <person name="Nash R.S."/>
            <person name="Weng S."/>
            <person name="Wong E.D."/>
            <person name="Lloyd P."/>
            <person name="Skrzypek M.S."/>
            <person name="Miyasato S.R."/>
            <person name="Simison M."/>
            <person name="Cherry J.M."/>
        </authorList>
    </citation>
    <scope>GENOME REANNOTATION</scope>
    <source>
        <strain>ATCC 204508 / S288c</strain>
    </source>
</reference>
<reference key="3">
    <citation type="journal article" date="2002" name="Nat. Biotechnol.">
        <title>An integrated approach for finding overlooked genes in yeast.</title>
        <authorList>
            <person name="Kumar A."/>
            <person name="Harrison P.M."/>
            <person name="Cheung K.-H."/>
            <person name="Lan N."/>
            <person name="Echols N."/>
            <person name="Bertone P."/>
            <person name="Miller P."/>
            <person name="Gerstein M.B."/>
            <person name="Snyder M."/>
        </authorList>
    </citation>
    <scope>NUCLEOTIDE SEQUENCE [GENOMIC DNA]</scope>
</reference>
<keyword id="KW-1185">Reference proteome</keyword>
<accession>Q8TGS8</accession>
<accession>D6VZS8</accession>
<protein>
    <recommendedName>
        <fullName>Uncharacterized protein YMR105W-A</fullName>
    </recommendedName>
</protein>
<gene>
    <name type="ordered locus">YMR105W-A</name>
</gene>
<feature type="chain" id="PRO_0000247786" description="Uncharacterized protein YMR105W-A">
    <location>
        <begin position="1"/>
        <end position="64"/>
    </location>
</feature>
<dbReference type="EMBL" id="Z49702">
    <property type="status" value="NOT_ANNOTATED_CDS"/>
    <property type="molecule type" value="Genomic_DNA"/>
</dbReference>
<dbReference type="EMBL" id="AF479907">
    <property type="protein sequence ID" value="AAL79220.1"/>
    <property type="molecule type" value="Genomic_DNA"/>
</dbReference>
<dbReference type="EMBL" id="BK006946">
    <property type="protein sequence ID" value="DAA10002.1"/>
    <property type="molecule type" value="Genomic_DNA"/>
</dbReference>
<dbReference type="RefSeq" id="NP_878142.1">
    <property type="nucleotide sequence ID" value="NM_001184614.1"/>
</dbReference>
<dbReference type="BioGRID" id="37042">
    <property type="interactions" value="1"/>
</dbReference>
<dbReference type="FunCoup" id="Q8TGS8">
    <property type="interactions" value="2"/>
</dbReference>
<dbReference type="PaxDb" id="4932-YMR105W-A"/>
<dbReference type="EnsemblFungi" id="YMR105W-A_mRNA">
    <property type="protein sequence ID" value="YMR105W-A"/>
    <property type="gene ID" value="YMR105W-A"/>
</dbReference>
<dbReference type="GeneID" id="1466500"/>
<dbReference type="KEGG" id="sce:YMR105W-A"/>
<dbReference type="AGR" id="SGD:S000028692"/>
<dbReference type="SGD" id="S000028692">
    <property type="gene designation" value="YMR105W-A"/>
</dbReference>
<dbReference type="VEuPathDB" id="FungiDB:YMR105W-A"/>
<dbReference type="HOGENOM" id="CLU_2868875_0_0_1"/>
<dbReference type="InParanoid" id="Q8TGS8"/>
<dbReference type="BioCyc" id="YEAST:G3O-33031-MONOMER"/>
<dbReference type="PRO" id="PR:Q8TGS8"/>
<dbReference type="Proteomes" id="UP000002311">
    <property type="component" value="Chromosome XIII"/>
</dbReference>
<dbReference type="RNAct" id="Q8TGS8">
    <property type="molecule type" value="protein"/>
</dbReference>
<organism>
    <name type="scientific">Saccharomyces cerevisiae (strain ATCC 204508 / S288c)</name>
    <name type="common">Baker's yeast</name>
    <dbReference type="NCBI Taxonomy" id="559292"/>
    <lineage>
        <taxon>Eukaryota</taxon>
        <taxon>Fungi</taxon>
        <taxon>Dikarya</taxon>
        <taxon>Ascomycota</taxon>
        <taxon>Saccharomycotina</taxon>
        <taxon>Saccharomycetes</taxon>
        <taxon>Saccharomycetales</taxon>
        <taxon>Saccharomycetaceae</taxon>
        <taxon>Saccharomyces</taxon>
    </lineage>
</organism>
<sequence>MILVHTGNVLYPRFIVVAFTFEQRQGGRCKGGKATCMASVQSYKVTMQISSMTIIYPLFIFFSL</sequence>
<name>YM105_YEAST</name>